<dbReference type="EC" id="1.14.11.65" evidence="6 7"/>
<dbReference type="EMBL" id="AL080237">
    <property type="protein sequence ID" value="CAB45782.1"/>
    <property type="status" value="ALT_SEQ"/>
    <property type="molecule type" value="Genomic_DNA"/>
</dbReference>
<dbReference type="EMBL" id="AL161491">
    <property type="protein sequence ID" value="CAB80908.1"/>
    <property type="status" value="ALT_SEQ"/>
    <property type="molecule type" value="Genomic_DNA"/>
</dbReference>
<dbReference type="EMBL" id="CP002687">
    <property type="protein sequence ID" value="AEE81964.1"/>
    <property type="molecule type" value="Genomic_DNA"/>
</dbReference>
<dbReference type="EMBL" id="AY072204">
    <property type="protein sequence ID" value="AAL60025.1"/>
    <property type="molecule type" value="mRNA"/>
</dbReference>
<dbReference type="EMBL" id="AY096708">
    <property type="protein sequence ID" value="AAM20342.1"/>
    <property type="molecule type" value="mRNA"/>
</dbReference>
<dbReference type="PIR" id="B85013">
    <property type="entry name" value="B85013"/>
</dbReference>
<dbReference type="PIR" id="T10539">
    <property type="entry name" value="T10539"/>
</dbReference>
<dbReference type="RefSeq" id="NP_192008.3">
    <property type="nucleotide sequence ID" value="NM_116327.5"/>
</dbReference>
<dbReference type="SMR" id="Q8VYB9"/>
<dbReference type="FunCoup" id="Q8VYB9">
    <property type="interactions" value="732"/>
</dbReference>
<dbReference type="IntAct" id="Q8VYB9">
    <property type="interactions" value="1"/>
</dbReference>
<dbReference type="STRING" id="3702.Q8VYB9"/>
<dbReference type="iPTMnet" id="Q8VYB9"/>
<dbReference type="PaxDb" id="3702-AT4G00990.1"/>
<dbReference type="ProteomicsDB" id="185218"/>
<dbReference type="EnsemblPlants" id="AT4G00990.1">
    <property type="protein sequence ID" value="AT4G00990.1"/>
    <property type="gene ID" value="AT4G00990"/>
</dbReference>
<dbReference type="GeneID" id="827933"/>
<dbReference type="Gramene" id="AT4G00990.1">
    <property type="protein sequence ID" value="AT4G00990.1"/>
    <property type="gene ID" value="AT4G00990"/>
</dbReference>
<dbReference type="KEGG" id="ath:AT4G00990"/>
<dbReference type="Araport" id="AT4G00990"/>
<dbReference type="TAIR" id="AT4G00990">
    <property type="gene designation" value="JMJ27"/>
</dbReference>
<dbReference type="eggNOG" id="KOG1356">
    <property type="taxonomic scope" value="Eukaryota"/>
</dbReference>
<dbReference type="HOGENOM" id="CLU_001811_2_0_1"/>
<dbReference type="InParanoid" id="Q8VYB9"/>
<dbReference type="OMA" id="SCACATI"/>
<dbReference type="BRENDA" id="1.14.11.65">
    <property type="organism ID" value="399"/>
</dbReference>
<dbReference type="CD-CODE" id="4299E36E">
    <property type="entry name" value="Nucleolus"/>
</dbReference>
<dbReference type="PRO" id="PR:Q8VYB9"/>
<dbReference type="Proteomes" id="UP000006548">
    <property type="component" value="Chromosome 4"/>
</dbReference>
<dbReference type="ExpressionAtlas" id="Q8VYB9">
    <property type="expression patterns" value="baseline and differential"/>
</dbReference>
<dbReference type="GO" id="GO:0005737">
    <property type="term" value="C:cytoplasm"/>
    <property type="evidence" value="ECO:0000314"/>
    <property type="project" value="UniProtKB"/>
</dbReference>
<dbReference type="GO" id="GO:0005634">
    <property type="term" value="C:nucleus"/>
    <property type="evidence" value="ECO:0000314"/>
    <property type="project" value="UniProtKB"/>
</dbReference>
<dbReference type="GO" id="GO:0032454">
    <property type="term" value="F:histone H3K9 demethylase activity"/>
    <property type="evidence" value="ECO:0000314"/>
    <property type="project" value="TAIR"/>
</dbReference>
<dbReference type="GO" id="GO:0140683">
    <property type="term" value="F:histone H3K9me/H3K9me2 demethylase activity"/>
    <property type="evidence" value="ECO:0000314"/>
    <property type="project" value="UniProtKB"/>
</dbReference>
<dbReference type="GO" id="GO:0008270">
    <property type="term" value="F:zinc ion binding"/>
    <property type="evidence" value="ECO:0007669"/>
    <property type="project" value="UniProtKB-KW"/>
</dbReference>
<dbReference type="GO" id="GO:0042742">
    <property type="term" value="P:defense response to bacterium"/>
    <property type="evidence" value="ECO:0000315"/>
    <property type="project" value="TAIR"/>
</dbReference>
<dbReference type="GO" id="GO:0040029">
    <property type="term" value="P:epigenetic regulation of gene expression"/>
    <property type="evidence" value="ECO:0000315"/>
    <property type="project" value="UniProtKB"/>
</dbReference>
<dbReference type="GO" id="GO:1902584">
    <property type="term" value="P:positive regulation of response to water deprivation"/>
    <property type="evidence" value="ECO:0000315"/>
    <property type="project" value="UniProtKB"/>
</dbReference>
<dbReference type="GO" id="GO:2000028">
    <property type="term" value="P:regulation of photoperiodism, flowering"/>
    <property type="evidence" value="ECO:0000315"/>
    <property type="project" value="TAIR"/>
</dbReference>
<dbReference type="GO" id="GO:0090333">
    <property type="term" value="P:regulation of stomatal closure"/>
    <property type="evidence" value="ECO:0000315"/>
    <property type="project" value="UniProtKB"/>
</dbReference>
<dbReference type="GO" id="GO:0009617">
    <property type="term" value="P:response to bacterium"/>
    <property type="evidence" value="ECO:0000270"/>
    <property type="project" value="UniProtKB"/>
</dbReference>
<dbReference type="GO" id="GO:0009414">
    <property type="term" value="P:response to water deprivation"/>
    <property type="evidence" value="ECO:0000270"/>
    <property type="project" value="UniProtKB"/>
</dbReference>
<dbReference type="Gene3D" id="2.60.120.650">
    <property type="entry name" value="Cupin"/>
    <property type="match status" value="1"/>
</dbReference>
<dbReference type="InterPro" id="IPR045109">
    <property type="entry name" value="JHDM2-like"/>
</dbReference>
<dbReference type="InterPro" id="IPR003347">
    <property type="entry name" value="JmjC_dom"/>
</dbReference>
<dbReference type="PANTHER" id="PTHR12549">
    <property type="entry name" value="JMJC DOMAIN-CONTAINING HISTONE DEMETHYLATION PROTEIN"/>
    <property type="match status" value="1"/>
</dbReference>
<dbReference type="PANTHER" id="PTHR12549:SF33">
    <property type="entry name" value="LYSINE-SPECIFIC DEMETHYLASE JMJ27"/>
    <property type="match status" value="1"/>
</dbReference>
<dbReference type="Pfam" id="PF02373">
    <property type="entry name" value="JmjC"/>
    <property type="match status" value="1"/>
</dbReference>
<dbReference type="SMART" id="SM00558">
    <property type="entry name" value="JmjC"/>
    <property type="match status" value="1"/>
</dbReference>
<dbReference type="SUPFAM" id="SSF51197">
    <property type="entry name" value="Clavaminate synthase-like"/>
    <property type="match status" value="1"/>
</dbReference>
<dbReference type="PROSITE" id="PS51184">
    <property type="entry name" value="JMJC"/>
    <property type="match status" value="1"/>
</dbReference>
<gene>
    <name evidence="8" type="primary">JMJ27</name>
    <name evidence="10" type="ordered locus">At4g00990</name>
    <name evidence="11" type="ORF">F3I3</name>
</gene>
<proteinExistence type="evidence at protein level"/>
<accession>Q8VYB9</accession>
<accession>Q9SV29</accession>
<organism>
    <name type="scientific">Arabidopsis thaliana</name>
    <name type="common">Mouse-ear cress</name>
    <dbReference type="NCBI Taxonomy" id="3702"/>
    <lineage>
        <taxon>Eukaryota</taxon>
        <taxon>Viridiplantae</taxon>
        <taxon>Streptophyta</taxon>
        <taxon>Embryophyta</taxon>
        <taxon>Tracheophyta</taxon>
        <taxon>Spermatophyta</taxon>
        <taxon>Magnoliopsida</taxon>
        <taxon>eudicotyledons</taxon>
        <taxon>Gunneridae</taxon>
        <taxon>Pentapetalae</taxon>
        <taxon>rosids</taxon>
        <taxon>malvids</taxon>
        <taxon>Brassicales</taxon>
        <taxon>Brassicaceae</taxon>
        <taxon>Camelineae</taxon>
        <taxon>Arabidopsis</taxon>
    </lineage>
</organism>
<protein>
    <recommendedName>
        <fullName evidence="8">Lysine-specific demethylase JMJ27</fullName>
        <ecNumber evidence="6 7">1.14.11.65</ecNumber>
    </recommendedName>
    <alternativeName>
        <fullName evidence="8">Jumonji domain-containing protein 27</fullName>
        <shortName evidence="8">AtJMJ27</shortName>
        <shortName evidence="8">Protein JUMONJI 27</shortName>
    </alternativeName>
    <alternativeName>
        <fullName evidence="8">Lysine-specific histone demethylase JMJ27</fullName>
    </alternativeName>
    <alternativeName>
        <fullName evidence="9">[histone H3]-dimethyl-L-lysine(9) monodemethylase JMJ27</fullName>
    </alternativeName>
</protein>
<sequence length="840" mass="96105">MEKMRGKRIRPRDSGELVEDGRSESERKTRKKENDVVSKGRIGRGRGRGEVSKRSIEIDISNPEKDIKPDGSRKCLGSTCHHCKILTSESDLIFCSKCNKKCYCFDCIKRSYSERTHEEVRAACPFCMMTCICRACLRLPLVIKPPSEKDTDVKLKQLQYLLVKVLPVLKDIYTEQNRELEIESTIRGHPVTEANIKRCKLDPSERIYCDLCRTSIANFHRSCPNKNCSVDICLSCCKELSEGFHQERDGKKNAEGKGYECRIPAGQGKDSDAYVPLHFSTWKLNSDSSIPCPPKECGGCGTSTLELRRLWKRDWVEKLITNAEKCTLNFRPTDVDIVHECSSCSTNSDSIRRQAAFRKNAHDNFLYSPNAVDLAEDDIAHFQFHWMKAEPVIVRNVLEKTSGLSWEPMVMWRACREMDPKRKGTEEETTKVKALDCLDWCEVEINLHQFFEGYLEGRMHKNGWPEMLKLKDWPPSDLFEKRLPRHNAEFIAALPFFDYTDPKSGILNLATRFPEGSLKPDLGPKTYIAYGFHEELNRGDSVTKLHCDISDAVNVLTHTAKVEIPPVKYQNIKVHQKKYAEAMLQKQQYSGQVKEASELENKSMKEVDESKKDLKDKAANEEQSNNSSRPSGSGEAEKVIISKEDNPTQPAVSTSVESIQEQKLDAPKETDGNTNERSKAVHGGAVWDIFRREDVPKLIQFLKRHEHEFRHFNNEPLESVIHPIHDQTMFLSDSQKKQLKEEFDIEPWTFEQHLGEAVFIPAGCPHQVRNRQSCIKVALDFVAPESVEECLRLTQEFRRLPKDHSSSEDKLELKKIALYAASSAIREVKGLMQSSRRSDT</sequence>
<keyword id="KW-0963">Cytoplasm</keyword>
<keyword id="KW-0408">Iron</keyword>
<keyword id="KW-0479">Metal-binding</keyword>
<keyword id="KW-0539">Nucleus</keyword>
<keyword id="KW-0560">Oxidoreductase</keyword>
<keyword id="KW-0611">Plant defense</keyword>
<keyword id="KW-1185">Reference proteome</keyword>
<keyword id="KW-0346">Stress response</keyword>
<keyword id="KW-0862">Zinc</keyword>
<keyword id="KW-0863">Zinc-finger</keyword>
<feature type="chain" id="PRO_0000456193" description="Lysine-specific demethylase JMJ27">
    <location>
        <begin position="1"/>
        <end position="840"/>
    </location>
</feature>
<feature type="domain" description="JmjC" evidence="3">
    <location>
        <begin position="502"/>
        <end position="798"/>
    </location>
</feature>
<feature type="zinc finger region" description="RING-type; degenerate" evidence="2">
    <location>
        <begin position="80"/>
        <end position="127"/>
    </location>
</feature>
<feature type="region of interest" description="Disordered" evidence="4">
    <location>
        <begin position="1"/>
        <end position="52"/>
    </location>
</feature>
<feature type="region of interest" description="Disordered" evidence="4">
    <location>
        <begin position="594"/>
        <end position="678"/>
    </location>
</feature>
<feature type="compositionally biased region" description="Basic residues" evidence="4">
    <location>
        <begin position="1"/>
        <end position="10"/>
    </location>
</feature>
<feature type="compositionally biased region" description="Basic and acidic residues" evidence="4">
    <location>
        <begin position="11"/>
        <end position="38"/>
    </location>
</feature>
<feature type="compositionally biased region" description="Basic and acidic residues" evidence="4">
    <location>
        <begin position="595"/>
        <end position="620"/>
    </location>
</feature>
<feature type="compositionally biased region" description="Polar residues" evidence="4">
    <location>
        <begin position="621"/>
        <end position="631"/>
    </location>
</feature>
<feature type="compositionally biased region" description="Basic and acidic residues" evidence="4">
    <location>
        <begin position="635"/>
        <end position="646"/>
    </location>
</feature>
<feature type="compositionally biased region" description="Polar residues" evidence="4">
    <location>
        <begin position="647"/>
        <end position="659"/>
    </location>
</feature>
<feature type="compositionally biased region" description="Basic and acidic residues" evidence="4">
    <location>
        <begin position="660"/>
        <end position="678"/>
    </location>
</feature>
<feature type="binding site" evidence="2">
    <location>
        <position position="80"/>
    </location>
    <ligand>
        <name>Zn(2+)</name>
        <dbReference type="ChEBI" id="CHEBI:29105"/>
        <label>1</label>
    </ligand>
</feature>
<feature type="binding site" evidence="2">
    <location>
        <position position="83"/>
    </location>
    <ligand>
        <name>Zn(2+)</name>
        <dbReference type="ChEBI" id="CHEBI:29105"/>
        <label>1</label>
    </ligand>
</feature>
<feature type="binding site" evidence="2">
    <location>
        <position position="95"/>
    </location>
    <ligand>
        <name>Zn(2+)</name>
        <dbReference type="ChEBI" id="CHEBI:29105"/>
        <label>2</label>
    </ligand>
</feature>
<feature type="binding site" evidence="2">
    <location>
        <position position="98"/>
    </location>
    <ligand>
        <name>Zn(2+)</name>
        <dbReference type="ChEBI" id="CHEBI:29105"/>
        <label>2</label>
    </ligand>
</feature>
<feature type="binding site" evidence="2">
    <location>
        <position position="104"/>
    </location>
    <ligand>
        <name>Zn(2+)</name>
        <dbReference type="ChEBI" id="CHEBI:29105"/>
        <label>1</label>
    </ligand>
</feature>
<feature type="binding site" evidence="2">
    <location>
        <position position="107"/>
    </location>
    <ligand>
        <name>Zn(2+)</name>
        <dbReference type="ChEBI" id="CHEBI:29105"/>
        <label>1</label>
    </ligand>
</feature>
<feature type="binding site" evidence="2">
    <location>
        <position position="124"/>
    </location>
    <ligand>
        <name>Zn(2+)</name>
        <dbReference type="ChEBI" id="CHEBI:29105"/>
        <label>2</label>
    </ligand>
</feature>
<feature type="binding site" evidence="2">
    <location>
        <position position="127"/>
    </location>
    <ligand>
        <name>Zn(2+)</name>
        <dbReference type="ChEBI" id="CHEBI:29105"/>
        <label>2</label>
    </ligand>
</feature>
<feature type="binding site" evidence="3">
    <location>
        <position position="546"/>
    </location>
    <ligand>
        <name>Fe cation</name>
        <dbReference type="ChEBI" id="CHEBI:24875"/>
        <note>catalytic</note>
    </ligand>
</feature>
<feature type="binding site" evidence="3">
    <location>
        <position position="548"/>
    </location>
    <ligand>
        <name>Fe cation</name>
        <dbReference type="ChEBI" id="CHEBI:24875"/>
        <note>catalytic</note>
    </ligand>
</feature>
<feature type="binding site" evidence="3">
    <location>
        <position position="766"/>
    </location>
    <ligand>
        <name>Fe cation</name>
        <dbReference type="ChEBI" id="CHEBI:24875"/>
        <note>catalytic</note>
    </ligand>
</feature>
<feature type="mutagenesis site" description="Impaired H3K9me1/2 demethylase activity; when associated with A-548." evidence="7">
    <original>H</original>
    <variation>A</variation>
    <location>
        <position position="546"/>
    </location>
</feature>
<feature type="mutagenesis site" description="Impaired H3K9me1/2 demethylase activity; when associated with A-546." evidence="7">
    <original>D</original>
    <variation>A</variation>
    <location>
        <position position="548"/>
    </location>
</feature>
<evidence type="ECO:0000250" key="1">
    <source>
        <dbReference type="UniProtKB" id="Q8GUI6"/>
    </source>
</evidence>
<evidence type="ECO:0000255" key="2">
    <source>
        <dbReference type="PROSITE-ProRule" id="PRU00175"/>
    </source>
</evidence>
<evidence type="ECO:0000255" key="3">
    <source>
        <dbReference type="PROSITE-ProRule" id="PRU00538"/>
    </source>
</evidence>
<evidence type="ECO:0000256" key="4">
    <source>
        <dbReference type="SAM" id="MobiDB-lite"/>
    </source>
</evidence>
<evidence type="ECO:0000269" key="5">
    <source>
    </source>
</evidence>
<evidence type="ECO:0000269" key="6">
    <source>
    </source>
</evidence>
<evidence type="ECO:0000269" key="7">
    <source>
    </source>
</evidence>
<evidence type="ECO:0000303" key="8">
    <source>
    </source>
</evidence>
<evidence type="ECO:0000305" key="9"/>
<evidence type="ECO:0000312" key="10">
    <source>
        <dbReference type="Araport" id="AT4G00990"/>
    </source>
</evidence>
<evidence type="ECO:0000312" key="11">
    <source>
        <dbReference type="EMBL" id="CAB45782.1"/>
    </source>
</evidence>
<comment type="function">
    <text evidence="6 7">Histone demethylase that demethylates 'Lys-9' (H3K9me) of histone H3 with a specific activity for H3K9me1 and H3K9me2 (PubMed:28650521, PubMed:34197643). No activity on H3K4, H3K27, H3K36, H3R2 and H4R3 methyl marks, but weak activity on H3K9me3 (PubMed:28650521, PubMed:34197643). Involved in regulation of gene expression (PubMed:28650521). Regulates flowering time by repressing the major flowering regulator CONSTANS (CO) and promoting FLOWERING LOCUS C (FLC) (PubMed:28650521). Exhibits a positive impact on abscisic acid- (ABA), hydrogen peroxide- (H(2)O(2)) and calcium- (Ca(2+)) induced stomatal closure (PubMed:34197643). Promotes stomatal-closure-dependent drought-stress responses through its histone demethylase activity toward at least GOLS2 and RD20 loci, thus protecting them from silencing by removing H3K9me2 marks in drought conditions (PubMed:34197643). Required for plant defenses leading to resistance against the virulent bacterial pathogen Pseudomonas syringae pv. tomato DC3000 (Pst DC3000) via a negative regulation of WRKY25 (a repressor of defense) and by triggering the expression of several pathogenesis-related (PR) proteins (e.g. PR1, PR3, PR4 and PR5) (PubMed:28650521).</text>
</comment>
<comment type="catalytic activity">
    <reaction evidence="6 7">
        <text>N(6),N(6)-dimethyl-L-lysyl(9)-[histone H3] + 2-oxoglutarate + O2 = N(6)-methyl-L-lysyl(9)-[histone H3] + formaldehyde + succinate + CO2</text>
        <dbReference type="Rhea" id="RHEA:60192"/>
        <dbReference type="Rhea" id="RHEA-COMP:15541"/>
        <dbReference type="Rhea" id="RHEA-COMP:15542"/>
        <dbReference type="ChEBI" id="CHEBI:15379"/>
        <dbReference type="ChEBI" id="CHEBI:16526"/>
        <dbReference type="ChEBI" id="CHEBI:16810"/>
        <dbReference type="ChEBI" id="CHEBI:16842"/>
        <dbReference type="ChEBI" id="CHEBI:30031"/>
        <dbReference type="ChEBI" id="CHEBI:61929"/>
        <dbReference type="ChEBI" id="CHEBI:61976"/>
    </reaction>
    <physiologicalReaction direction="left-to-right" evidence="6 7">
        <dbReference type="Rhea" id="RHEA:60193"/>
    </physiologicalReaction>
</comment>
<comment type="catalytic activity">
    <reaction evidence="6 7">
        <text>N(6)-methyl-L-lysyl(9)-[histone H3] + 2-oxoglutarate + O2 = L-lysyl(9)-[histone H3] + formaldehyde + succinate + CO2</text>
        <dbReference type="Rhea" id="RHEA:60196"/>
        <dbReference type="Rhea" id="RHEA-COMP:15542"/>
        <dbReference type="Rhea" id="RHEA-COMP:15546"/>
        <dbReference type="ChEBI" id="CHEBI:15379"/>
        <dbReference type="ChEBI" id="CHEBI:16526"/>
        <dbReference type="ChEBI" id="CHEBI:16810"/>
        <dbReference type="ChEBI" id="CHEBI:16842"/>
        <dbReference type="ChEBI" id="CHEBI:29969"/>
        <dbReference type="ChEBI" id="CHEBI:30031"/>
        <dbReference type="ChEBI" id="CHEBI:61929"/>
    </reaction>
    <physiologicalReaction direction="left-to-right" evidence="6 7">
        <dbReference type="Rhea" id="RHEA:60197"/>
    </physiologicalReaction>
</comment>
<comment type="catalytic activity">
    <reaction evidence="6 7">
        <text>N(6),N(6)-dimethyl-L-lysyl(9)-[histone H3] + 2 2-oxoglutarate + 2 O2 = L-lysyl(9)-[histone H3] + 2 formaldehyde + 2 succinate + 2 CO2</text>
        <dbReference type="Rhea" id="RHEA:60188"/>
        <dbReference type="Rhea" id="RHEA-COMP:15541"/>
        <dbReference type="Rhea" id="RHEA-COMP:15546"/>
        <dbReference type="ChEBI" id="CHEBI:15379"/>
        <dbReference type="ChEBI" id="CHEBI:16526"/>
        <dbReference type="ChEBI" id="CHEBI:16810"/>
        <dbReference type="ChEBI" id="CHEBI:16842"/>
        <dbReference type="ChEBI" id="CHEBI:29969"/>
        <dbReference type="ChEBI" id="CHEBI:30031"/>
        <dbReference type="ChEBI" id="CHEBI:61976"/>
        <dbReference type="EC" id="1.14.11.65"/>
    </reaction>
    <physiologicalReaction direction="left-to-right" evidence="6 7">
        <dbReference type="Rhea" id="RHEA:60189"/>
    </physiologicalReaction>
</comment>
<comment type="cofactor">
    <cofactor evidence="1">
        <name>Fe(2+)</name>
        <dbReference type="ChEBI" id="CHEBI:29033"/>
    </cofactor>
    <text evidence="1">Binds 1 Fe(2+) ion per subunit.</text>
</comment>
<comment type="subunit">
    <text evidence="7">Interacts with RPN1A.</text>
</comment>
<comment type="subcellular location">
    <subcellularLocation>
        <location evidence="6 7">Nucleus</location>
    </subcellularLocation>
    <subcellularLocation>
        <location evidence="6">Cytoplasm</location>
    </subcellularLocation>
    <text evidence="6">Mainly observed in the nucleus, but also, to a lower extent, in the cytoplasm.</text>
</comment>
<comment type="tissue specificity">
    <text evidence="5 6 7">Expressed in seedlings, inflorescences, flowers and siliques, and, at low levels, in roots, leaves (including vascular bundles) and stems (PubMed:18713399, PubMed:28650521, PubMed:34197643). Particularly observed in stomatal guard cells (PubMed:34197643).</text>
</comment>
<comment type="induction">
    <text evidence="6 7">Negatively regulated by RPN1A via proteasome-mediated protein degradation in non-drought conditions (PubMed:34197643). Accumulates in response to drought (PubMed:34197643). Induced by the virulent bacterial pathogen Pseudomonas syringae pv. tomato DC3000 (Pst DC3000) (PubMed:28650521).</text>
</comment>
<comment type="disruption phenotype">
    <text evidence="6 7">Higher accumulation of histone H3 methylation H3K9me1 and H3K9me2 marks, including hypermethylation of histones (H3) at CO and FLC promoters during flowering and at PR1 and WRKY25 promoters upon pathogenic interaction (PubMed:28650521). Early flowering probably due to misregulation of CO and FLC (PubMed:28650521). Higher water loss leading to an increased sensitivity to drought and associated with reduced abscisic acid- (ABA), hydrogen peroxide- (H(2)O(2)) and calcium- (Ca(2+)) induced stomatal closure (PubMed:34197643). Impaired resistance to the virulent bacterial pathogen Pseudomonas syringae pv. tomato DC3000 (Pst DC3000) associated with compromised expression of pathogenesis-related (PR) genes (e.g. PR1, PR3, PR4 and PR5), but an enhanced accumulation of WRKY25 (PubMed:28650521).</text>
</comment>
<comment type="similarity">
    <text evidence="9">Belongs to the JARID1 histone demethylase family.</text>
</comment>
<comment type="sequence caution" evidence="9">
    <conflict type="erroneous gene model prediction">
        <sequence resource="EMBL-CDS" id="CAB45782"/>
    </conflict>
</comment>
<comment type="sequence caution" evidence="9">
    <conflict type="erroneous gene model prediction">
        <sequence resource="EMBL-CDS" id="CAB80908"/>
    </conflict>
</comment>
<name>JMJ27_ARATH</name>
<reference key="1">
    <citation type="journal article" date="1999" name="Nature">
        <title>Sequence and analysis of chromosome 4 of the plant Arabidopsis thaliana.</title>
        <authorList>
            <person name="Mayer K.F.X."/>
            <person name="Schueller C."/>
            <person name="Wambutt R."/>
            <person name="Murphy G."/>
            <person name="Volckaert G."/>
            <person name="Pohl T."/>
            <person name="Duesterhoeft A."/>
            <person name="Stiekema W."/>
            <person name="Entian K.-D."/>
            <person name="Terryn N."/>
            <person name="Harris B."/>
            <person name="Ansorge W."/>
            <person name="Brandt P."/>
            <person name="Grivell L.A."/>
            <person name="Rieger M."/>
            <person name="Weichselgartner M."/>
            <person name="de Simone V."/>
            <person name="Obermaier B."/>
            <person name="Mache R."/>
            <person name="Mueller M."/>
            <person name="Kreis M."/>
            <person name="Delseny M."/>
            <person name="Puigdomenech P."/>
            <person name="Watson M."/>
            <person name="Schmidtheini T."/>
            <person name="Reichert B."/>
            <person name="Portetelle D."/>
            <person name="Perez-Alonso M."/>
            <person name="Boutry M."/>
            <person name="Bancroft I."/>
            <person name="Vos P."/>
            <person name="Hoheisel J."/>
            <person name="Zimmermann W."/>
            <person name="Wedler H."/>
            <person name="Ridley P."/>
            <person name="Langham S.-A."/>
            <person name="McCullagh B."/>
            <person name="Bilham L."/>
            <person name="Robben J."/>
            <person name="van der Schueren J."/>
            <person name="Grymonprez B."/>
            <person name="Chuang Y.-J."/>
            <person name="Vandenbussche F."/>
            <person name="Braeken M."/>
            <person name="Weltjens I."/>
            <person name="Voet M."/>
            <person name="Bastiaens I."/>
            <person name="Aert R."/>
            <person name="Defoor E."/>
            <person name="Weitzenegger T."/>
            <person name="Bothe G."/>
            <person name="Ramsperger U."/>
            <person name="Hilbert H."/>
            <person name="Braun M."/>
            <person name="Holzer E."/>
            <person name="Brandt A."/>
            <person name="Peters S."/>
            <person name="van Staveren M."/>
            <person name="Dirkse W."/>
            <person name="Mooijman P."/>
            <person name="Klein Lankhorst R."/>
            <person name="Rose M."/>
            <person name="Hauf J."/>
            <person name="Koetter P."/>
            <person name="Berneiser S."/>
            <person name="Hempel S."/>
            <person name="Feldpausch M."/>
            <person name="Lamberth S."/>
            <person name="Van den Daele H."/>
            <person name="De Keyser A."/>
            <person name="Buysshaert C."/>
            <person name="Gielen J."/>
            <person name="Villarroel R."/>
            <person name="De Clercq R."/>
            <person name="van Montagu M."/>
            <person name="Rogers J."/>
            <person name="Cronin A."/>
            <person name="Quail M.A."/>
            <person name="Bray-Allen S."/>
            <person name="Clark L."/>
            <person name="Doggett J."/>
            <person name="Hall S."/>
            <person name="Kay M."/>
            <person name="Lennard N."/>
            <person name="McLay K."/>
            <person name="Mayes R."/>
            <person name="Pettett A."/>
            <person name="Rajandream M.A."/>
            <person name="Lyne M."/>
            <person name="Benes V."/>
            <person name="Rechmann S."/>
            <person name="Borkova D."/>
            <person name="Bloecker H."/>
            <person name="Scharfe M."/>
            <person name="Grimm M."/>
            <person name="Loehnert T.-H."/>
            <person name="Dose S."/>
            <person name="de Haan M."/>
            <person name="Maarse A.C."/>
            <person name="Schaefer M."/>
            <person name="Mueller-Auer S."/>
            <person name="Gabel C."/>
            <person name="Fuchs M."/>
            <person name="Fartmann B."/>
            <person name="Granderath K."/>
            <person name="Dauner D."/>
            <person name="Herzl A."/>
            <person name="Neumann S."/>
            <person name="Argiriou A."/>
            <person name="Vitale D."/>
            <person name="Liguori R."/>
            <person name="Piravandi E."/>
            <person name="Massenet O."/>
            <person name="Quigley F."/>
            <person name="Clabauld G."/>
            <person name="Muendlein A."/>
            <person name="Felber R."/>
            <person name="Schnabl S."/>
            <person name="Hiller R."/>
            <person name="Schmidt W."/>
            <person name="Lecharny A."/>
            <person name="Aubourg S."/>
            <person name="Chefdor F."/>
            <person name="Cooke R."/>
            <person name="Berger C."/>
            <person name="Monfort A."/>
            <person name="Casacuberta E."/>
            <person name="Gibbons T."/>
            <person name="Weber N."/>
            <person name="Vandenbol M."/>
            <person name="Bargues M."/>
            <person name="Terol J."/>
            <person name="Torres A."/>
            <person name="Perez-Perez A."/>
            <person name="Purnelle B."/>
            <person name="Bent E."/>
            <person name="Johnson S."/>
            <person name="Tacon D."/>
            <person name="Jesse T."/>
            <person name="Heijnen L."/>
            <person name="Schwarz S."/>
            <person name="Scholler P."/>
            <person name="Heber S."/>
            <person name="Francs P."/>
            <person name="Bielke C."/>
            <person name="Frishman D."/>
            <person name="Haase D."/>
            <person name="Lemcke K."/>
            <person name="Mewes H.-W."/>
            <person name="Stocker S."/>
            <person name="Zaccaria P."/>
            <person name="Bevan M."/>
            <person name="Wilson R.K."/>
            <person name="de la Bastide M."/>
            <person name="Habermann K."/>
            <person name="Parnell L."/>
            <person name="Dedhia N."/>
            <person name="Gnoj L."/>
            <person name="Schutz K."/>
            <person name="Huang E."/>
            <person name="Spiegel L."/>
            <person name="Sekhon M."/>
            <person name="Murray J."/>
            <person name="Sheet P."/>
            <person name="Cordes M."/>
            <person name="Abu-Threideh J."/>
            <person name="Stoneking T."/>
            <person name="Kalicki J."/>
            <person name="Graves T."/>
            <person name="Harmon G."/>
            <person name="Edwards J."/>
            <person name="Latreille P."/>
            <person name="Courtney L."/>
            <person name="Cloud J."/>
            <person name="Abbott A."/>
            <person name="Scott K."/>
            <person name="Johnson D."/>
            <person name="Minx P."/>
            <person name="Bentley D."/>
            <person name="Fulton B."/>
            <person name="Miller N."/>
            <person name="Greco T."/>
            <person name="Kemp K."/>
            <person name="Kramer J."/>
            <person name="Fulton L."/>
            <person name="Mardis E."/>
            <person name="Dante M."/>
            <person name="Pepin K."/>
            <person name="Hillier L.W."/>
            <person name="Nelson J."/>
            <person name="Spieth J."/>
            <person name="Ryan E."/>
            <person name="Andrews S."/>
            <person name="Geisel C."/>
            <person name="Layman D."/>
            <person name="Du H."/>
            <person name="Ali J."/>
            <person name="Berghoff A."/>
            <person name="Jones K."/>
            <person name="Drone K."/>
            <person name="Cotton M."/>
            <person name="Joshu C."/>
            <person name="Antonoiu B."/>
            <person name="Zidanic M."/>
            <person name="Strong C."/>
            <person name="Sun H."/>
            <person name="Lamar B."/>
            <person name="Yordan C."/>
            <person name="Ma P."/>
            <person name="Zhong J."/>
            <person name="Preston R."/>
            <person name="Vil D."/>
            <person name="Shekher M."/>
            <person name="Matero A."/>
            <person name="Shah R."/>
            <person name="Swaby I.K."/>
            <person name="O'Shaughnessy A."/>
            <person name="Rodriguez M."/>
            <person name="Hoffman J."/>
            <person name="Till S."/>
            <person name="Granat S."/>
            <person name="Shohdy N."/>
            <person name="Hasegawa A."/>
            <person name="Hameed A."/>
            <person name="Lodhi M."/>
            <person name="Johnson A."/>
            <person name="Chen E."/>
            <person name="Marra M.A."/>
            <person name="Martienssen R."/>
            <person name="McCombie W.R."/>
        </authorList>
    </citation>
    <scope>NUCLEOTIDE SEQUENCE [LARGE SCALE GENOMIC DNA]</scope>
    <source>
        <strain>cv. Columbia</strain>
    </source>
</reference>
<reference key="2">
    <citation type="journal article" date="2017" name="Plant J.">
        <title>Araport11: a complete reannotation of the Arabidopsis thaliana reference genome.</title>
        <authorList>
            <person name="Cheng C.Y."/>
            <person name="Krishnakumar V."/>
            <person name="Chan A.P."/>
            <person name="Thibaud-Nissen F."/>
            <person name="Schobel S."/>
            <person name="Town C.D."/>
        </authorList>
    </citation>
    <scope>GENOME REANNOTATION</scope>
    <source>
        <strain>cv. Columbia</strain>
    </source>
</reference>
<reference key="3">
    <citation type="journal article" date="2003" name="Science">
        <title>Empirical analysis of transcriptional activity in the Arabidopsis genome.</title>
        <authorList>
            <person name="Yamada K."/>
            <person name="Lim J."/>
            <person name="Dale J.M."/>
            <person name="Chen H."/>
            <person name="Shinn P."/>
            <person name="Palm C.J."/>
            <person name="Southwick A.M."/>
            <person name="Wu H.C."/>
            <person name="Kim C.J."/>
            <person name="Nguyen M."/>
            <person name="Pham P.K."/>
            <person name="Cheuk R.F."/>
            <person name="Karlin-Newmann G."/>
            <person name="Liu S.X."/>
            <person name="Lam B."/>
            <person name="Sakano H."/>
            <person name="Wu T."/>
            <person name="Yu G."/>
            <person name="Miranda M."/>
            <person name="Quach H.L."/>
            <person name="Tripp M."/>
            <person name="Chang C.H."/>
            <person name="Lee J.M."/>
            <person name="Toriumi M.J."/>
            <person name="Chan M.M."/>
            <person name="Tang C.C."/>
            <person name="Onodera C.S."/>
            <person name="Deng J.M."/>
            <person name="Akiyama K."/>
            <person name="Ansari Y."/>
            <person name="Arakawa T."/>
            <person name="Banh J."/>
            <person name="Banno F."/>
            <person name="Bowser L."/>
            <person name="Brooks S.Y."/>
            <person name="Carninci P."/>
            <person name="Chao Q."/>
            <person name="Choy N."/>
            <person name="Enju A."/>
            <person name="Goldsmith A.D."/>
            <person name="Gurjal M."/>
            <person name="Hansen N.F."/>
            <person name="Hayashizaki Y."/>
            <person name="Johnson-Hopson C."/>
            <person name="Hsuan V.W."/>
            <person name="Iida K."/>
            <person name="Karnes M."/>
            <person name="Khan S."/>
            <person name="Koesema E."/>
            <person name="Ishida J."/>
            <person name="Jiang P.X."/>
            <person name="Jones T."/>
            <person name="Kawai J."/>
            <person name="Kamiya A."/>
            <person name="Meyers C."/>
            <person name="Nakajima M."/>
            <person name="Narusaka M."/>
            <person name="Seki M."/>
            <person name="Sakurai T."/>
            <person name="Satou M."/>
            <person name="Tamse R."/>
            <person name="Vaysberg M."/>
            <person name="Wallender E.K."/>
            <person name="Wong C."/>
            <person name="Yamamura Y."/>
            <person name="Yuan S."/>
            <person name="Shinozaki K."/>
            <person name="Davis R.W."/>
            <person name="Theologis A."/>
            <person name="Ecker J.R."/>
        </authorList>
    </citation>
    <scope>NUCLEOTIDE SEQUENCE [LARGE SCALE MRNA]</scope>
    <source>
        <strain>cv. Columbia</strain>
    </source>
</reference>
<reference key="4">
    <citation type="journal article" date="2008" name="J. Integr. Plant Biol.">
        <title>Comparative analysis of JmjC domain-containing proteins reveals the potential histone demethylases in Arabidopsis and rice.</title>
        <authorList>
            <person name="Lu F."/>
            <person name="Li G."/>
            <person name="Cui X."/>
            <person name="Liu C."/>
            <person name="Wang X.-J."/>
            <person name="Cao X."/>
        </authorList>
    </citation>
    <scope>GENE FAMILY</scope>
    <scope>NOMENCLATURE</scope>
    <scope>TISSUE SPECIFICITY</scope>
</reference>
<reference key="5">
    <citation type="journal article" date="2017" name="Plant J.">
        <title>JMJ27, an Arabidopsis H3K9 histone demethylase, modulates defense against Pseudomonas syringae and flowering time.</title>
        <authorList>
            <person name="Dutta A."/>
            <person name="Choudhary P."/>
            <person name="Caruana J."/>
            <person name="Raina R."/>
        </authorList>
    </citation>
    <scope>FUNCTION</scope>
    <scope>DISRUPTION PHENOTYPE</scope>
    <scope>CATALYTIC ACTIVITY</scope>
    <scope>SUBCELLULAR LOCATION</scope>
    <scope>INDUCTION BY PSEUDOMONAS SYRINGAE</scope>
    <scope>TISSUE SPECIFICITY</scope>
    <source>
        <strain>cv. Columbia</strain>
    </source>
</reference>
<reference key="6">
    <citation type="journal article" date="2021" name="New Phytol.">
        <title>JMJ27-mediated histone H3K9 demethylation positively regulates drought-stress responses in Arabidopsis.</title>
        <authorList>
            <person name="Wang Q."/>
            <person name="Liu P."/>
            <person name="Jing H."/>
            <person name="Zhou X.F."/>
            <person name="Zhao B."/>
            <person name="Li Y."/>
            <person name="Jin J.B."/>
        </authorList>
    </citation>
    <scope>FUNCTION</scope>
    <scope>MUTAGENESIS OF HIS-546 AND ASP-548</scope>
    <scope>DISRUPTION PHENOTYPE</scope>
    <scope>CATALYTIC ACTIVITY</scope>
    <scope>INTERACTION WITH RPN1A</scope>
    <scope>REPRESSION BY RPN1A</scope>
    <scope>TISSUE SPECIFICITY</scope>
    <scope>SUBCELLULAR LOCATION</scope>
    <scope>INDUCTION BY DROUGHT</scope>
    <source>
        <strain>cv. Columbia</strain>
    </source>
</reference>